<dbReference type="EMBL" id="CR543861">
    <property type="protein sequence ID" value="CAG69380.1"/>
    <property type="molecule type" value="Genomic_DNA"/>
</dbReference>
<dbReference type="SMR" id="Q6F985"/>
<dbReference type="STRING" id="202950.GCA_001485005_02270"/>
<dbReference type="KEGG" id="aci:ACIAD2622"/>
<dbReference type="eggNOG" id="COG0823">
    <property type="taxonomic scope" value="Bacteria"/>
</dbReference>
<dbReference type="HOGENOM" id="CLU_047123_0_0_6"/>
<dbReference type="Proteomes" id="UP000000430">
    <property type="component" value="Chromosome"/>
</dbReference>
<dbReference type="GO" id="GO:0042597">
    <property type="term" value="C:periplasmic space"/>
    <property type="evidence" value="ECO:0007669"/>
    <property type="project" value="UniProtKB-SubCell"/>
</dbReference>
<dbReference type="GO" id="GO:0051301">
    <property type="term" value="P:cell division"/>
    <property type="evidence" value="ECO:0007669"/>
    <property type="project" value="UniProtKB-UniRule"/>
</dbReference>
<dbReference type="GO" id="GO:0017038">
    <property type="term" value="P:protein import"/>
    <property type="evidence" value="ECO:0007669"/>
    <property type="project" value="InterPro"/>
</dbReference>
<dbReference type="Gene3D" id="2.120.10.30">
    <property type="entry name" value="TolB, C-terminal domain"/>
    <property type="match status" value="1"/>
</dbReference>
<dbReference type="Gene3D" id="3.40.50.10070">
    <property type="entry name" value="TolB, N-terminal domain"/>
    <property type="match status" value="1"/>
</dbReference>
<dbReference type="HAMAP" id="MF_00671">
    <property type="entry name" value="TolB"/>
    <property type="match status" value="1"/>
</dbReference>
<dbReference type="InterPro" id="IPR011042">
    <property type="entry name" value="6-blade_b-propeller_TolB-like"/>
</dbReference>
<dbReference type="InterPro" id="IPR011659">
    <property type="entry name" value="PD40"/>
</dbReference>
<dbReference type="InterPro" id="IPR014167">
    <property type="entry name" value="Tol-Pal_TolB"/>
</dbReference>
<dbReference type="InterPro" id="IPR007195">
    <property type="entry name" value="TolB_N"/>
</dbReference>
<dbReference type="NCBIfam" id="TIGR02800">
    <property type="entry name" value="propeller_TolB"/>
    <property type="match status" value="1"/>
</dbReference>
<dbReference type="PANTHER" id="PTHR36842:SF1">
    <property type="entry name" value="PROTEIN TOLB"/>
    <property type="match status" value="1"/>
</dbReference>
<dbReference type="PANTHER" id="PTHR36842">
    <property type="entry name" value="PROTEIN TOLB HOMOLOG"/>
    <property type="match status" value="1"/>
</dbReference>
<dbReference type="Pfam" id="PF07676">
    <property type="entry name" value="PD40"/>
    <property type="match status" value="4"/>
</dbReference>
<dbReference type="Pfam" id="PF04052">
    <property type="entry name" value="TolB_N"/>
    <property type="match status" value="1"/>
</dbReference>
<dbReference type="SUPFAM" id="SSF52964">
    <property type="entry name" value="TolB, N-terminal domain"/>
    <property type="match status" value="1"/>
</dbReference>
<dbReference type="SUPFAM" id="SSF69304">
    <property type="entry name" value="Tricorn protease N-terminal domain"/>
    <property type="match status" value="1"/>
</dbReference>
<feature type="signal peptide" evidence="1">
    <location>
        <begin position="1"/>
        <end position="25"/>
    </location>
</feature>
<feature type="chain" id="PRO_0000034619" description="Tol-Pal system protein TolB" evidence="1">
    <location>
        <begin position="26"/>
        <end position="425"/>
    </location>
</feature>
<sequence length="425" mass="46428">MTRKHILSFALMTALGMTVTSTAFAQLHLEIAKAPEQAPKIAIVPFGNDQSIFPIVENDLNRSGRFSSASKNLPTTASIDAIQASAWQAAGIPYVVVGNLKPAANNAFEVHYQLYDVQKQQYLLNEVLTVPASRVRQAAHMISDAIYQALTGIAGDFSGRIAYVLRNPATPDQRYTLQIADTDGEQPKTVLSSRDPILSPAWTPDAKKIAYVSFETKRPAIYLQDLATGQREVLASFKGLNGAPSFSPDGKSMLFTASMNGNPEIYQMDLSTRQLQRMTNDNAIDTEARYAPDGKSFIFTSDRGGSPQIYRYSFDDSSTKRLTFRGAFNARGTLSADGKNIALVHRPSGSNYKVAIMNISTGIVNILTPTSLDESPSFSPNGQMVVYATYEGSRGLLSIMSTDGRFRMNLPSEQGEVREPAWAPK</sequence>
<gene>
    <name evidence="1" type="primary">tolB</name>
    <name type="ordered locus">ACIAD2622</name>
</gene>
<accession>Q6F985</accession>
<comment type="function">
    <text evidence="1">Part of the Tol-Pal system, which plays a role in outer membrane invagination during cell division and is important for maintaining outer membrane integrity.</text>
</comment>
<comment type="subunit">
    <text evidence="1">The Tol-Pal system is composed of five core proteins: the inner membrane proteins TolA, TolQ and TolR, the periplasmic protein TolB and the outer membrane protein Pal. They form a network linking the inner and outer membranes and the peptidoglycan layer.</text>
</comment>
<comment type="subcellular location">
    <subcellularLocation>
        <location evidence="1">Periplasm</location>
    </subcellularLocation>
</comment>
<comment type="similarity">
    <text evidence="1">Belongs to the TolB family.</text>
</comment>
<keyword id="KW-0131">Cell cycle</keyword>
<keyword id="KW-0132">Cell division</keyword>
<keyword id="KW-0574">Periplasm</keyword>
<keyword id="KW-0732">Signal</keyword>
<evidence type="ECO:0000255" key="1">
    <source>
        <dbReference type="HAMAP-Rule" id="MF_00671"/>
    </source>
</evidence>
<organism>
    <name type="scientific">Acinetobacter baylyi (strain ATCC 33305 / BD413 / ADP1)</name>
    <dbReference type="NCBI Taxonomy" id="62977"/>
    <lineage>
        <taxon>Bacteria</taxon>
        <taxon>Pseudomonadati</taxon>
        <taxon>Pseudomonadota</taxon>
        <taxon>Gammaproteobacteria</taxon>
        <taxon>Moraxellales</taxon>
        <taxon>Moraxellaceae</taxon>
        <taxon>Acinetobacter</taxon>
    </lineage>
</organism>
<proteinExistence type="inferred from homology"/>
<protein>
    <recommendedName>
        <fullName evidence="1">Tol-Pal system protein TolB</fullName>
    </recommendedName>
</protein>
<reference key="1">
    <citation type="journal article" date="2004" name="Nucleic Acids Res.">
        <title>Unique features revealed by the genome sequence of Acinetobacter sp. ADP1, a versatile and naturally transformation competent bacterium.</title>
        <authorList>
            <person name="Barbe V."/>
            <person name="Vallenet D."/>
            <person name="Fonknechten N."/>
            <person name="Kreimeyer A."/>
            <person name="Oztas S."/>
            <person name="Labarre L."/>
            <person name="Cruveiller S."/>
            <person name="Robert C."/>
            <person name="Duprat S."/>
            <person name="Wincker P."/>
            <person name="Ornston L.N."/>
            <person name="Weissenbach J."/>
            <person name="Marliere P."/>
            <person name="Cohen G.N."/>
            <person name="Medigue C."/>
        </authorList>
    </citation>
    <scope>NUCLEOTIDE SEQUENCE [LARGE SCALE GENOMIC DNA]</scope>
    <source>
        <strain>ATCC 33305 / BD413 / ADP1</strain>
    </source>
</reference>
<name>TOLB_ACIAD</name>